<sequence>MAQVQYYGTGRRKHSVARVRLVPGEGRIVINKREMDTYFGLETLKLIVKQPLVLTETLGRYDVLVNVNGGGTTGQAGAIRHGVARALLKADPELRGALKRAGFLTRDPRMKERKKYGLKAARRAPQFSKR</sequence>
<gene>
    <name evidence="1" type="primary">rpsI</name>
    <name type="ordered locus">BBR47_02550</name>
</gene>
<keyword id="KW-1185">Reference proteome</keyword>
<keyword id="KW-0687">Ribonucleoprotein</keyword>
<keyword id="KW-0689">Ribosomal protein</keyword>
<feature type="chain" id="PRO_1000146437" description="Small ribosomal subunit protein uS9">
    <location>
        <begin position="1"/>
        <end position="130"/>
    </location>
</feature>
<organism>
    <name type="scientific">Brevibacillus brevis (strain 47 / JCM 6285 / NBRC 100599)</name>
    <dbReference type="NCBI Taxonomy" id="358681"/>
    <lineage>
        <taxon>Bacteria</taxon>
        <taxon>Bacillati</taxon>
        <taxon>Bacillota</taxon>
        <taxon>Bacilli</taxon>
        <taxon>Bacillales</taxon>
        <taxon>Paenibacillaceae</taxon>
        <taxon>Brevibacillus</taxon>
    </lineage>
</organism>
<accession>C0ZIL4</accession>
<reference key="1">
    <citation type="submission" date="2005-03" db="EMBL/GenBank/DDBJ databases">
        <title>Brevibacillus brevis strain 47, complete genome.</title>
        <authorList>
            <person name="Hosoyama A."/>
            <person name="Yamada R."/>
            <person name="Hongo Y."/>
            <person name="Terui Y."/>
            <person name="Ankai A."/>
            <person name="Masuyama W."/>
            <person name="Sekiguchi M."/>
            <person name="Takeda T."/>
            <person name="Asano K."/>
            <person name="Ohji S."/>
            <person name="Ichikawa N."/>
            <person name="Narita S."/>
            <person name="Aoki N."/>
            <person name="Miura H."/>
            <person name="Matsushita S."/>
            <person name="Sekigawa T."/>
            <person name="Yamagata H."/>
            <person name="Yoshikawa H."/>
            <person name="Udaka S."/>
            <person name="Tanikawa S."/>
            <person name="Fujita N."/>
        </authorList>
    </citation>
    <scope>NUCLEOTIDE SEQUENCE [LARGE SCALE GENOMIC DNA]</scope>
    <source>
        <strain>47 / JCM 6285 / NBRC 100599</strain>
    </source>
</reference>
<dbReference type="EMBL" id="AP008955">
    <property type="protein sequence ID" value="BAH41232.1"/>
    <property type="molecule type" value="Genomic_DNA"/>
</dbReference>
<dbReference type="RefSeq" id="WP_005828788.1">
    <property type="nucleotide sequence ID" value="NC_012491.1"/>
</dbReference>
<dbReference type="SMR" id="C0ZIL4"/>
<dbReference type="STRING" id="358681.BBR47_02550"/>
<dbReference type="GeneID" id="95752081"/>
<dbReference type="KEGG" id="bbe:BBR47_02550"/>
<dbReference type="eggNOG" id="COG0103">
    <property type="taxonomic scope" value="Bacteria"/>
</dbReference>
<dbReference type="HOGENOM" id="CLU_046483_2_1_9"/>
<dbReference type="Proteomes" id="UP000001877">
    <property type="component" value="Chromosome"/>
</dbReference>
<dbReference type="GO" id="GO:0022627">
    <property type="term" value="C:cytosolic small ribosomal subunit"/>
    <property type="evidence" value="ECO:0007669"/>
    <property type="project" value="TreeGrafter"/>
</dbReference>
<dbReference type="GO" id="GO:0003723">
    <property type="term" value="F:RNA binding"/>
    <property type="evidence" value="ECO:0007669"/>
    <property type="project" value="TreeGrafter"/>
</dbReference>
<dbReference type="GO" id="GO:0003735">
    <property type="term" value="F:structural constituent of ribosome"/>
    <property type="evidence" value="ECO:0007669"/>
    <property type="project" value="InterPro"/>
</dbReference>
<dbReference type="GO" id="GO:0006412">
    <property type="term" value="P:translation"/>
    <property type="evidence" value="ECO:0007669"/>
    <property type="project" value="UniProtKB-UniRule"/>
</dbReference>
<dbReference type="FunFam" id="3.30.230.10:FF:000001">
    <property type="entry name" value="30S ribosomal protein S9"/>
    <property type="match status" value="1"/>
</dbReference>
<dbReference type="Gene3D" id="3.30.230.10">
    <property type="match status" value="1"/>
</dbReference>
<dbReference type="HAMAP" id="MF_00532_B">
    <property type="entry name" value="Ribosomal_uS9_B"/>
    <property type="match status" value="1"/>
</dbReference>
<dbReference type="InterPro" id="IPR020568">
    <property type="entry name" value="Ribosomal_Su5_D2-typ_SF"/>
</dbReference>
<dbReference type="InterPro" id="IPR000754">
    <property type="entry name" value="Ribosomal_uS9"/>
</dbReference>
<dbReference type="InterPro" id="IPR023035">
    <property type="entry name" value="Ribosomal_uS9_bac/plastid"/>
</dbReference>
<dbReference type="InterPro" id="IPR020574">
    <property type="entry name" value="Ribosomal_uS9_CS"/>
</dbReference>
<dbReference type="InterPro" id="IPR014721">
    <property type="entry name" value="Ribsml_uS5_D2-typ_fold_subgr"/>
</dbReference>
<dbReference type="NCBIfam" id="NF001099">
    <property type="entry name" value="PRK00132.1"/>
    <property type="match status" value="1"/>
</dbReference>
<dbReference type="PANTHER" id="PTHR21569">
    <property type="entry name" value="RIBOSOMAL PROTEIN S9"/>
    <property type="match status" value="1"/>
</dbReference>
<dbReference type="PANTHER" id="PTHR21569:SF1">
    <property type="entry name" value="SMALL RIBOSOMAL SUBUNIT PROTEIN US9M"/>
    <property type="match status" value="1"/>
</dbReference>
<dbReference type="Pfam" id="PF00380">
    <property type="entry name" value="Ribosomal_S9"/>
    <property type="match status" value="1"/>
</dbReference>
<dbReference type="SUPFAM" id="SSF54211">
    <property type="entry name" value="Ribosomal protein S5 domain 2-like"/>
    <property type="match status" value="1"/>
</dbReference>
<dbReference type="PROSITE" id="PS00360">
    <property type="entry name" value="RIBOSOMAL_S9"/>
    <property type="match status" value="1"/>
</dbReference>
<comment type="similarity">
    <text evidence="1">Belongs to the universal ribosomal protein uS9 family.</text>
</comment>
<name>RS9_BREBN</name>
<protein>
    <recommendedName>
        <fullName evidence="1">Small ribosomal subunit protein uS9</fullName>
    </recommendedName>
    <alternativeName>
        <fullName evidence="2">30S ribosomal protein S9</fullName>
    </alternativeName>
</protein>
<proteinExistence type="inferred from homology"/>
<evidence type="ECO:0000255" key="1">
    <source>
        <dbReference type="HAMAP-Rule" id="MF_00532"/>
    </source>
</evidence>
<evidence type="ECO:0000305" key="2"/>